<name>RS11_LACCB</name>
<keyword id="KW-0687">Ribonucleoprotein</keyword>
<keyword id="KW-0689">Ribosomal protein</keyword>
<keyword id="KW-0694">RNA-binding</keyword>
<keyword id="KW-0699">rRNA-binding</keyword>
<accession>B3WAJ3</accession>
<proteinExistence type="inferred from homology"/>
<sequence length="129" mass="13772">MAGRKTTRKRRVRKNVESGVAHIHSTFNNTLVMITDPRGNAIAWSSAGALGFKGSRKSTPFAAQMAAEAAAKESMEHGMKSVEVAVKGPGSGREAAIRSLQATGLEVTAIRDVTPVPHNGSRPPKRRRV</sequence>
<reference key="1">
    <citation type="submission" date="2008-06" db="EMBL/GenBank/DDBJ databases">
        <title>Lactobacillus casei BL23 complete genome sequence.</title>
        <authorList>
            <person name="Maze A."/>
            <person name="Boel G."/>
            <person name="Bourand A."/>
            <person name="Loux V."/>
            <person name="Gibrat J.F."/>
            <person name="Zuniga M."/>
            <person name="Hartke A."/>
            <person name="Deutscher J."/>
        </authorList>
    </citation>
    <scope>NUCLEOTIDE SEQUENCE [LARGE SCALE GENOMIC DNA]</scope>
    <source>
        <strain>BL23</strain>
    </source>
</reference>
<evidence type="ECO:0000255" key="1">
    <source>
        <dbReference type="HAMAP-Rule" id="MF_01310"/>
    </source>
</evidence>
<evidence type="ECO:0000305" key="2"/>
<protein>
    <recommendedName>
        <fullName evidence="1">Small ribosomal subunit protein uS11</fullName>
    </recommendedName>
    <alternativeName>
        <fullName evidence="2">30S ribosomal protein S11</fullName>
    </alternativeName>
</protein>
<gene>
    <name evidence="1" type="primary">rpsK</name>
    <name type="ordered locus">LCABL_26460</name>
</gene>
<feature type="chain" id="PRO_1000141103" description="Small ribosomal subunit protein uS11">
    <location>
        <begin position="1"/>
        <end position="129"/>
    </location>
</feature>
<organism>
    <name type="scientific">Lacticaseibacillus casei (strain BL23)</name>
    <name type="common">Lactobacillus casei</name>
    <dbReference type="NCBI Taxonomy" id="543734"/>
    <lineage>
        <taxon>Bacteria</taxon>
        <taxon>Bacillati</taxon>
        <taxon>Bacillota</taxon>
        <taxon>Bacilli</taxon>
        <taxon>Lactobacillales</taxon>
        <taxon>Lactobacillaceae</taxon>
        <taxon>Lacticaseibacillus</taxon>
    </lineage>
</organism>
<comment type="function">
    <text evidence="1">Located on the platform of the 30S subunit, it bridges several disparate RNA helices of the 16S rRNA. Forms part of the Shine-Dalgarno cleft in the 70S ribosome.</text>
</comment>
<comment type="subunit">
    <text evidence="1">Part of the 30S ribosomal subunit. Interacts with proteins S7 and S18. Binds to IF-3.</text>
</comment>
<comment type="similarity">
    <text evidence="1">Belongs to the universal ribosomal protein uS11 family.</text>
</comment>
<dbReference type="EMBL" id="FM177140">
    <property type="protein sequence ID" value="CAQ67712.1"/>
    <property type="molecule type" value="Genomic_DNA"/>
</dbReference>
<dbReference type="SMR" id="B3WAJ3"/>
<dbReference type="KEGG" id="lcb:LCABL_26460"/>
<dbReference type="HOGENOM" id="CLU_072439_5_0_9"/>
<dbReference type="GO" id="GO:1990904">
    <property type="term" value="C:ribonucleoprotein complex"/>
    <property type="evidence" value="ECO:0007669"/>
    <property type="project" value="UniProtKB-KW"/>
</dbReference>
<dbReference type="GO" id="GO:0005840">
    <property type="term" value="C:ribosome"/>
    <property type="evidence" value="ECO:0007669"/>
    <property type="project" value="UniProtKB-KW"/>
</dbReference>
<dbReference type="GO" id="GO:0019843">
    <property type="term" value="F:rRNA binding"/>
    <property type="evidence" value="ECO:0007669"/>
    <property type="project" value="UniProtKB-UniRule"/>
</dbReference>
<dbReference type="GO" id="GO:0003735">
    <property type="term" value="F:structural constituent of ribosome"/>
    <property type="evidence" value="ECO:0007669"/>
    <property type="project" value="InterPro"/>
</dbReference>
<dbReference type="GO" id="GO:0006412">
    <property type="term" value="P:translation"/>
    <property type="evidence" value="ECO:0007669"/>
    <property type="project" value="UniProtKB-UniRule"/>
</dbReference>
<dbReference type="FunFam" id="3.30.420.80:FF:000001">
    <property type="entry name" value="30S ribosomal protein S11"/>
    <property type="match status" value="1"/>
</dbReference>
<dbReference type="Gene3D" id="3.30.420.80">
    <property type="entry name" value="Ribosomal protein S11"/>
    <property type="match status" value="1"/>
</dbReference>
<dbReference type="HAMAP" id="MF_01310">
    <property type="entry name" value="Ribosomal_uS11"/>
    <property type="match status" value="1"/>
</dbReference>
<dbReference type="InterPro" id="IPR001971">
    <property type="entry name" value="Ribosomal_uS11"/>
</dbReference>
<dbReference type="InterPro" id="IPR019981">
    <property type="entry name" value="Ribosomal_uS11_bac-type"/>
</dbReference>
<dbReference type="InterPro" id="IPR018102">
    <property type="entry name" value="Ribosomal_uS11_CS"/>
</dbReference>
<dbReference type="InterPro" id="IPR036967">
    <property type="entry name" value="Ribosomal_uS11_sf"/>
</dbReference>
<dbReference type="NCBIfam" id="NF003698">
    <property type="entry name" value="PRK05309.1"/>
    <property type="match status" value="1"/>
</dbReference>
<dbReference type="NCBIfam" id="TIGR03632">
    <property type="entry name" value="uS11_bact"/>
    <property type="match status" value="1"/>
</dbReference>
<dbReference type="PANTHER" id="PTHR11759">
    <property type="entry name" value="40S RIBOSOMAL PROTEIN S14/30S RIBOSOMAL PROTEIN S11"/>
    <property type="match status" value="1"/>
</dbReference>
<dbReference type="Pfam" id="PF00411">
    <property type="entry name" value="Ribosomal_S11"/>
    <property type="match status" value="1"/>
</dbReference>
<dbReference type="PIRSF" id="PIRSF002131">
    <property type="entry name" value="Ribosomal_S11"/>
    <property type="match status" value="1"/>
</dbReference>
<dbReference type="SUPFAM" id="SSF53137">
    <property type="entry name" value="Translational machinery components"/>
    <property type="match status" value="1"/>
</dbReference>
<dbReference type="PROSITE" id="PS00054">
    <property type="entry name" value="RIBOSOMAL_S11"/>
    <property type="match status" value="1"/>
</dbReference>